<proteinExistence type="evidence at transcript level"/>
<dbReference type="EMBL" id="L44133">
    <property type="protein sequence ID" value="AAA86287.1"/>
    <property type="molecule type" value="mRNA"/>
</dbReference>
<dbReference type="PIR" id="T03946">
    <property type="entry name" value="T03946"/>
</dbReference>
<dbReference type="SMR" id="Q41853"/>
<dbReference type="FunCoup" id="Q41853">
    <property type="interactions" value="248"/>
</dbReference>
<dbReference type="STRING" id="4577.Q41853"/>
<dbReference type="PaxDb" id="4577-GRMZM2G028041_P01"/>
<dbReference type="eggNOG" id="KOG0773">
    <property type="taxonomic scope" value="Eukaryota"/>
</dbReference>
<dbReference type="InParanoid" id="Q41853"/>
<dbReference type="Proteomes" id="UP000007305">
    <property type="component" value="Unplaced"/>
</dbReference>
<dbReference type="ExpressionAtlas" id="Q41853">
    <property type="expression patterns" value="baseline and differential"/>
</dbReference>
<dbReference type="GO" id="GO:0005634">
    <property type="term" value="C:nucleus"/>
    <property type="evidence" value="ECO:0000318"/>
    <property type="project" value="GO_Central"/>
</dbReference>
<dbReference type="GO" id="GO:0003677">
    <property type="term" value="F:DNA binding"/>
    <property type="evidence" value="ECO:0007669"/>
    <property type="project" value="UniProtKB-KW"/>
</dbReference>
<dbReference type="GO" id="GO:0000981">
    <property type="term" value="F:DNA-binding transcription factor activity, RNA polymerase II-specific"/>
    <property type="evidence" value="ECO:0007669"/>
    <property type="project" value="InterPro"/>
</dbReference>
<dbReference type="CDD" id="cd00086">
    <property type="entry name" value="homeodomain"/>
    <property type="match status" value="1"/>
</dbReference>
<dbReference type="FunFam" id="1.10.10.60:FF:000076">
    <property type="entry name" value="Homeobox protein knotted-1-like 2"/>
    <property type="match status" value="1"/>
</dbReference>
<dbReference type="Gene3D" id="1.10.10.60">
    <property type="entry name" value="Homeodomain-like"/>
    <property type="match status" value="1"/>
</dbReference>
<dbReference type="InterPro" id="IPR005539">
    <property type="entry name" value="ELK_dom"/>
</dbReference>
<dbReference type="InterPro" id="IPR001356">
    <property type="entry name" value="HD"/>
</dbReference>
<dbReference type="InterPro" id="IPR017970">
    <property type="entry name" value="Homeobox_CS"/>
</dbReference>
<dbReference type="InterPro" id="IPR009057">
    <property type="entry name" value="Homeodomain-like_sf"/>
</dbReference>
<dbReference type="InterPro" id="IPR008422">
    <property type="entry name" value="KN_HD"/>
</dbReference>
<dbReference type="InterPro" id="IPR005540">
    <property type="entry name" value="KNOX1"/>
</dbReference>
<dbReference type="InterPro" id="IPR005541">
    <property type="entry name" value="KNOX2"/>
</dbReference>
<dbReference type="InterPro" id="IPR050224">
    <property type="entry name" value="TALE_homeobox"/>
</dbReference>
<dbReference type="PANTHER" id="PTHR11850">
    <property type="entry name" value="HOMEOBOX PROTEIN TRANSCRIPTION FACTORS"/>
    <property type="match status" value="1"/>
</dbReference>
<dbReference type="Pfam" id="PF03789">
    <property type="entry name" value="ELK"/>
    <property type="match status" value="1"/>
</dbReference>
<dbReference type="Pfam" id="PF05920">
    <property type="entry name" value="Homeobox_KN"/>
    <property type="match status" value="1"/>
</dbReference>
<dbReference type="Pfam" id="PF03790">
    <property type="entry name" value="KNOX1"/>
    <property type="match status" value="1"/>
</dbReference>
<dbReference type="Pfam" id="PF03791">
    <property type="entry name" value="KNOX2"/>
    <property type="match status" value="1"/>
</dbReference>
<dbReference type="SMART" id="SM01188">
    <property type="entry name" value="ELK"/>
    <property type="match status" value="1"/>
</dbReference>
<dbReference type="SMART" id="SM00389">
    <property type="entry name" value="HOX"/>
    <property type="match status" value="1"/>
</dbReference>
<dbReference type="SMART" id="SM01255">
    <property type="entry name" value="KNOX1"/>
    <property type="match status" value="1"/>
</dbReference>
<dbReference type="SMART" id="SM01256">
    <property type="entry name" value="KNOX2"/>
    <property type="match status" value="1"/>
</dbReference>
<dbReference type="SUPFAM" id="SSF46689">
    <property type="entry name" value="Homeodomain-like"/>
    <property type="match status" value="1"/>
</dbReference>
<dbReference type="PROSITE" id="PS51213">
    <property type="entry name" value="ELK"/>
    <property type="match status" value="1"/>
</dbReference>
<dbReference type="PROSITE" id="PS00027">
    <property type="entry name" value="HOMEOBOX_1"/>
    <property type="match status" value="1"/>
</dbReference>
<dbReference type="PROSITE" id="PS50071">
    <property type="entry name" value="HOMEOBOX_2"/>
    <property type="match status" value="1"/>
</dbReference>
<protein>
    <recommendedName>
        <fullName>Homeobox protein rough sheath 1</fullName>
    </recommendedName>
</protein>
<name>RSH1_MAIZE</name>
<evidence type="ECO:0000255" key="1">
    <source>
        <dbReference type="PROSITE-ProRule" id="PRU00108"/>
    </source>
</evidence>
<evidence type="ECO:0000255" key="2">
    <source>
        <dbReference type="PROSITE-ProRule" id="PRU00559"/>
    </source>
</evidence>
<evidence type="ECO:0000256" key="3">
    <source>
        <dbReference type="SAM" id="MobiDB-lite"/>
    </source>
</evidence>
<evidence type="ECO:0000305" key="4"/>
<sequence>MDQSFGNLGAGAGSSSGGSNSKAAATAVSSSSFLQLPLSTASPAYYGAPLALLHHAAAAPSSSQQHQQQQHHHHYARHGAEMSAAEAEAIKAKIVAHPQYSALLAAYLDCQKVGAPPDVLERLTAMAAKLDASAAGRHEPRDPELDQFMEAYCNMLVKYREELTRPIDEAMEFLKRVEAQLDCISGGGGSSSARLSLADGKSEGVGSSEDDMDPNGRENDPPEIDPRAEDKELKYQLLKKYSGYLSSLRQEFSKKKKKGKLPKEARQKLLHWWELHYKWPYPSETEKIALAESTGLDQKQINNWFINQRKRHWKPSEDMPFVMMEGFHPQNAAALYMDGPFMRDGMYRLGS</sequence>
<organism>
    <name type="scientific">Zea mays</name>
    <name type="common">Maize</name>
    <dbReference type="NCBI Taxonomy" id="4577"/>
    <lineage>
        <taxon>Eukaryota</taxon>
        <taxon>Viridiplantae</taxon>
        <taxon>Streptophyta</taxon>
        <taxon>Embryophyta</taxon>
        <taxon>Tracheophyta</taxon>
        <taxon>Spermatophyta</taxon>
        <taxon>Magnoliopsida</taxon>
        <taxon>Liliopsida</taxon>
        <taxon>Poales</taxon>
        <taxon>Poaceae</taxon>
        <taxon>PACMAD clade</taxon>
        <taxon>Panicoideae</taxon>
        <taxon>Andropogonodae</taxon>
        <taxon>Andropogoneae</taxon>
        <taxon>Tripsacinae</taxon>
        <taxon>Zea</taxon>
    </lineage>
</organism>
<gene>
    <name type="primary">RS1</name>
</gene>
<accession>Q41853</accession>
<feature type="chain" id="PRO_0000049275" description="Homeobox protein rough sheath 1">
    <location>
        <begin position="1"/>
        <end position="351"/>
    </location>
</feature>
<feature type="domain" description="ELK" evidence="2">
    <location>
        <begin position="232"/>
        <end position="252"/>
    </location>
</feature>
<feature type="DNA-binding region" description="Homeobox; TALE-type" evidence="1">
    <location>
        <begin position="253"/>
        <end position="316"/>
    </location>
</feature>
<feature type="region of interest" description="Disordered" evidence="3">
    <location>
        <begin position="1"/>
        <end position="23"/>
    </location>
</feature>
<feature type="region of interest" description="Disordered" evidence="3">
    <location>
        <begin position="57"/>
        <end position="82"/>
    </location>
</feature>
<feature type="region of interest" description="Disordered" evidence="3">
    <location>
        <begin position="187"/>
        <end position="229"/>
    </location>
</feature>
<feature type="compositionally biased region" description="Low complexity" evidence="3">
    <location>
        <begin position="57"/>
        <end position="68"/>
    </location>
</feature>
<feature type="compositionally biased region" description="Basic and acidic residues" evidence="3">
    <location>
        <begin position="214"/>
        <end position="229"/>
    </location>
</feature>
<reference key="1">
    <citation type="journal article" date="1995" name="Genes Dev.">
        <title>Ectopic expression of the knox homeo box gene rough sheath1 alters cell fate in the maize leaf.</title>
        <authorList>
            <person name="Schneeberger R.G."/>
            <person name="Becraft P.W."/>
            <person name="Hake S."/>
            <person name="Freeling M."/>
        </authorList>
    </citation>
    <scope>NUCLEOTIDE SEQUENCE [MRNA]</scope>
    <source>
        <strain>cv. B73</strain>
    </source>
</reference>
<reference key="2">
    <citation type="journal article" date="1994" name="Plant Cell">
        <title>Sequence analysis and expression patterns divide the Maize knotted1-like homeobox genes into two classes.</title>
        <authorList>
            <person name="Kerstetter R."/>
            <person name="Vollbrecht E."/>
            <person name="Lowe B."/>
            <person name="Veit B."/>
            <person name="Yamaguchi J."/>
            <person name="Hake S."/>
        </authorList>
    </citation>
    <scope>NUCLEOTIDE SEQUENCE [MRNA] OF 229-316</scope>
    <source>
        <tissue>Ear of corn</tissue>
        <tissue>Seedling</tissue>
    </source>
</reference>
<keyword id="KW-0217">Developmental protein</keyword>
<keyword id="KW-0238">DNA-binding</keyword>
<keyword id="KW-0371">Homeobox</keyword>
<keyword id="KW-0539">Nucleus</keyword>
<keyword id="KW-1185">Reference proteome</keyword>
<comment type="function">
    <text>Plays a possible role in patterning the placement of lateral organs along the axis of the shoot. Mutations in RS1 alters cell fate and causes unregulated cell division and expansion in the leaf. Probably binds to the DNA sequence 5'-TGAC-3'.</text>
</comment>
<comment type="subcellular location">
    <subcellularLocation>
        <location evidence="4">Nucleus</location>
    </subcellularLocation>
</comment>
<comment type="developmental stage">
    <text>Expressed in the shoot apical meristem in a circular pattern preceding leaf initiation, but is not detectable in leaf primordia or mature leaves in normal plants. Rings of RS1 expression subtend leaf insertion sites in the shoot, and lateral organ primordia in inflorescence and floral meristems.</text>
</comment>
<comment type="similarity">
    <text evidence="2">Belongs to the TALE/KNOX homeobox family.</text>
</comment>